<comment type="function">
    <text evidence="1">Encapsidates the genome, protecting it from nucleases. If expressed without protein P it binds non-specifically RNA and therefore can bind it's own mRNA. Interaction with protein P abolishes any non-specific RNA binding, and prevents phosphorylation. The soluble N-P complex encapsidates specifically the genomic RNA, with protein N protecting the genome like a pearl necklace. The encapsidated genomic RNA is termed the nucleocapsid (NC) and serves as template for viral transcription and replication. Protein N binds protein P in the NC through a different interaction, and can be phosphorylated. Subsequent viral replication is dependent on intracellular concentration of newly synthesized protein N. During replication, encapsidation by protein N is coupled to RNA synthesis and all replicative products are resistant to nucleases (By similarity).</text>
</comment>
<comment type="subunit">
    <text evidence="1">Homomultimerizes to form the nucleocapsid. Binds to viral genomic RNA (By similarity).</text>
</comment>
<comment type="subcellular location">
    <subcellularLocation>
        <location>Virion</location>
    </subcellularLocation>
    <subcellularLocation>
        <location evidence="1">Host cytoplasm</location>
    </subcellularLocation>
</comment>
<comment type="PTM">
    <text evidence="1">Phosphorylated by host.</text>
</comment>
<comment type="similarity">
    <text evidence="2">Belongs to the lyssavirus nucleocapsid protein family.</text>
</comment>
<reference key="1">
    <citation type="journal article" date="2007" name="J. Gen. Virol.">
        <title>Comparative analysis of the full genome sequence of European bat lyssavirus type 1 and type 2 with other lyssaviruses and evidence for a conserved transcription termination and polyadenylation motif in the G-L 3' non-translated region.</title>
        <authorList>
            <person name="Marston D.A."/>
            <person name="McElhinney L.M."/>
            <person name="Johnson N."/>
            <person name="Muller T."/>
            <person name="Conzelmann K.K."/>
            <person name="Tordo N."/>
            <person name="Fooks A.R."/>
        </authorList>
    </citation>
    <scope>NUCLEOTIDE SEQUENCE [GENOMIC RNA]</scope>
</reference>
<organism>
    <name type="scientific">European bat lyssavirus 1 (strain Bat/Germany/RV9/1968)</name>
    <name type="common">EBLV1</name>
    <dbReference type="NCBI Taxonomy" id="453115"/>
    <lineage>
        <taxon>Viruses</taxon>
        <taxon>Riboviria</taxon>
        <taxon>Orthornavirae</taxon>
        <taxon>Negarnaviricota</taxon>
        <taxon>Haploviricotina</taxon>
        <taxon>Monjiviricetes</taxon>
        <taxon>Mononegavirales</taxon>
        <taxon>Rhabdoviridae</taxon>
        <taxon>Alpharhabdovirinae</taxon>
        <taxon>Lyssavirus</taxon>
        <taxon>Lyssavirus hamburg</taxon>
    </lineage>
</organism>
<name>NCAP_EBLV1</name>
<accession>A4UHP8</accession>
<protein>
    <recommendedName>
        <fullName>Nucleoprotein</fullName>
        <shortName>NP</shortName>
    </recommendedName>
    <alternativeName>
        <fullName>Nucleocapsid protein</fullName>
        <shortName>Protein N</shortName>
    </alternativeName>
</protein>
<proteinExistence type="inferred from homology"/>
<gene>
    <name type="primary">N</name>
</gene>
<sequence>MDVNKVVFKVHNQLVSVRPEVISDQYEYKYPAIKDKKKPSITLGKDPDLKTAYKSILSGMNAAKLDPDDVCSYLAGAMVLFEGICPEDWTSYGINIAKKGDKITPATLVDIHRTNTEGNWAQTGGQDLTRDPTTPEHASLVGLLLCLYRLSKIVGQNTGNYKTNVADRMEQIFETAPFVKIVEHHTLMTTHKMCANWSTIPNFRFLAGAYDMFFARIEHLYSAIRVGTVVTAYEDCSGLVSFTGFIKQINLTAREAILYFFHKNFEEEIKRMFEPGQETAVPHSYFIHFRSLGLSGKSPYSSNAVGHVFNLIHFVGCYMGQIRSLNATVIQSCAPHEMSVLGGYLGEEFFGKGTFERRFFRDEKELQDYEAAESTKVDVALADDGTVNSDDEDFFSGDTRSPEAVYTRIMMNGGRLKRSHIKRYVSVSANHQARPNSFAEFLNKTYSSDPR</sequence>
<organismHost>
    <name type="scientific">Mammalia</name>
    <dbReference type="NCBI Taxonomy" id="40674"/>
</organismHost>
<dbReference type="EMBL" id="EF157976">
    <property type="protein sequence ID" value="ABO65243.1"/>
    <property type="molecule type" value="Genomic_RNA"/>
</dbReference>
<dbReference type="RefSeq" id="YP_001285388.1">
    <property type="nucleotide sequence ID" value="NC_009527.1"/>
</dbReference>
<dbReference type="SMR" id="A4UHP8"/>
<dbReference type="GeneID" id="5219908"/>
<dbReference type="KEGG" id="vg:5219908"/>
<dbReference type="Proteomes" id="UP000008926">
    <property type="component" value="Segment"/>
</dbReference>
<dbReference type="GO" id="GO:0019029">
    <property type="term" value="C:helical viral capsid"/>
    <property type="evidence" value="ECO:0007669"/>
    <property type="project" value="UniProtKB-KW"/>
</dbReference>
<dbReference type="GO" id="GO:0030430">
    <property type="term" value="C:host cell cytoplasm"/>
    <property type="evidence" value="ECO:0007669"/>
    <property type="project" value="UniProtKB-SubCell"/>
</dbReference>
<dbReference type="GO" id="GO:1990904">
    <property type="term" value="C:ribonucleoprotein complex"/>
    <property type="evidence" value="ECO:0007669"/>
    <property type="project" value="UniProtKB-KW"/>
</dbReference>
<dbReference type="GO" id="GO:0019013">
    <property type="term" value="C:viral nucleocapsid"/>
    <property type="evidence" value="ECO:0007669"/>
    <property type="project" value="UniProtKB-KW"/>
</dbReference>
<dbReference type="GO" id="GO:0003723">
    <property type="term" value="F:RNA binding"/>
    <property type="evidence" value="ECO:0007669"/>
    <property type="project" value="UniProtKB-KW"/>
</dbReference>
<dbReference type="Gene3D" id="1.10.3610.10">
    <property type="entry name" value="Nucleoprotein"/>
    <property type="match status" value="1"/>
</dbReference>
<dbReference type="Gene3D" id="1.10.3570.10">
    <property type="entry name" value="Rhabdovirus nucleocapsid protein like domain"/>
    <property type="match status" value="1"/>
</dbReference>
<dbReference type="InterPro" id="IPR000448">
    <property type="entry name" value="Rhabdo_ncapsid"/>
</dbReference>
<dbReference type="InterPro" id="IPR023331">
    <property type="entry name" value="Rhabdovirus_ncapsid_C"/>
</dbReference>
<dbReference type="InterPro" id="IPR023330">
    <property type="entry name" value="Rhabdovirus_ncapsid_N"/>
</dbReference>
<dbReference type="InterPro" id="IPR035961">
    <property type="entry name" value="Rhabdovirus_nucleoprotein-like"/>
</dbReference>
<dbReference type="Pfam" id="PF00945">
    <property type="entry name" value="Rhabdo_ncap"/>
    <property type="match status" value="1"/>
</dbReference>
<dbReference type="SUPFAM" id="SSF140809">
    <property type="entry name" value="Rhabdovirus nucleoprotein-like"/>
    <property type="match status" value="1"/>
</dbReference>
<evidence type="ECO:0000250" key="1"/>
<evidence type="ECO:0000305" key="2"/>
<feature type="chain" id="PRO_0000299093" description="Nucleoprotein">
    <location>
        <begin position="1"/>
        <end position="451"/>
    </location>
</feature>
<feature type="modified residue" description="Phosphoserine; by host CK2" evidence="1">
    <location>
        <position position="389"/>
    </location>
</feature>
<keyword id="KW-0167">Capsid protein</keyword>
<keyword id="KW-1139">Helical capsid protein</keyword>
<keyword id="KW-1035">Host cytoplasm</keyword>
<keyword id="KW-0597">Phosphoprotein</keyword>
<keyword id="KW-1185">Reference proteome</keyword>
<keyword id="KW-0687">Ribonucleoprotein</keyword>
<keyword id="KW-0694">RNA-binding</keyword>
<keyword id="KW-0766">Superantigen</keyword>
<keyword id="KW-0543">Viral nucleoprotein</keyword>
<keyword id="KW-0946">Virion</keyword>